<sequence length="208" mass="22234">MKVKICGVTHPDDAWEAAKAGADYVGMIFAKDSQRCVTKETAKCIVEAIRDGGSEPVGVFSEHSIGEIIAISSATGITSIQLSGRNIDFKFSQLRELFSIFYVVSVYSNGQPSAAIPPMSNTVTVIYDHIGGERGTPFDWRAFSPFQHDNWMLGGGVNPGNVGEAVRLLSPRGIDVSSGVERPGVLRKDVTLMQALIDSAKGVGNLTS</sequence>
<reference key="1">
    <citation type="journal article" date="2000" name="Nucleic Acids Res.">
        <title>Genome sequences of Chlamydia trachomatis MoPn and Chlamydia pneumoniae AR39.</title>
        <authorList>
            <person name="Read T.D."/>
            <person name="Brunham R.C."/>
            <person name="Shen C."/>
            <person name="Gill S.R."/>
            <person name="Heidelberg J.F."/>
            <person name="White O."/>
            <person name="Hickey E.K."/>
            <person name="Peterson J.D."/>
            <person name="Utterback T.R."/>
            <person name="Berry K.J."/>
            <person name="Bass S."/>
            <person name="Linher K.D."/>
            <person name="Weidman J.F."/>
            <person name="Khouri H.M."/>
            <person name="Craven B."/>
            <person name="Bowman C."/>
            <person name="Dodson R.J."/>
            <person name="Gwinn M.L."/>
            <person name="Nelson W.C."/>
            <person name="DeBoy R.T."/>
            <person name="Kolonay J.F."/>
            <person name="McClarty G."/>
            <person name="Salzberg S.L."/>
            <person name="Eisen J.A."/>
            <person name="Fraser C.M."/>
        </authorList>
    </citation>
    <scope>NUCLEOTIDE SEQUENCE [LARGE SCALE GENOMIC DNA]</scope>
    <source>
        <strain>MoPn / Nigg</strain>
    </source>
</reference>
<accession>Q9PK67</accession>
<feature type="chain" id="PRO_0000154353" description="N-(5'-phosphoribosyl)anthranilate isomerase">
    <location>
        <begin position="1"/>
        <end position="208"/>
    </location>
</feature>
<gene>
    <name type="primary">trpF</name>
    <name type="ordered locus">TC_0603</name>
</gene>
<comment type="catalytic activity">
    <reaction>
        <text>N-(5-phospho-beta-D-ribosyl)anthranilate = 1-(2-carboxyphenylamino)-1-deoxy-D-ribulose 5-phosphate</text>
        <dbReference type="Rhea" id="RHEA:21540"/>
        <dbReference type="ChEBI" id="CHEBI:18277"/>
        <dbReference type="ChEBI" id="CHEBI:58613"/>
        <dbReference type="EC" id="5.3.1.24"/>
    </reaction>
</comment>
<comment type="pathway">
    <text>Amino-acid biosynthesis; L-tryptophan biosynthesis; L-tryptophan from chorismate: step 3/5.</text>
</comment>
<comment type="similarity">
    <text evidence="1">Belongs to the TrpF family.</text>
</comment>
<keyword id="KW-0028">Amino-acid biosynthesis</keyword>
<keyword id="KW-0057">Aromatic amino acid biosynthesis</keyword>
<keyword id="KW-0413">Isomerase</keyword>
<keyword id="KW-0822">Tryptophan biosynthesis</keyword>
<evidence type="ECO:0000305" key="1"/>
<dbReference type="EC" id="5.3.1.24"/>
<dbReference type="EMBL" id="AE002160">
    <property type="protein sequence ID" value="AAF73577.1"/>
    <property type="molecule type" value="Genomic_DNA"/>
</dbReference>
<dbReference type="RefSeq" id="WP_010230961.1">
    <property type="nucleotide sequence ID" value="NZ_CP063055.1"/>
</dbReference>
<dbReference type="SMR" id="Q9PK67"/>
<dbReference type="GeneID" id="1245965"/>
<dbReference type="KEGG" id="cmu:TC_0603"/>
<dbReference type="eggNOG" id="COG0135">
    <property type="taxonomic scope" value="Bacteria"/>
</dbReference>
<dbReference type="HOGENOM" id="CLU_076364_2_0_0"/>
<dbReference type="OrthoDB" id="9786954at2"/>
<dbReference type="UniPathway" id="UPA00035">
    <property type="reaction ID" value="UER00042"/>
</dbReference>
<dbReference type="Proteomes" id="UP000000800">
    <property type="component" value="Chromosome"/>
</dbReference>
<dbReference type="GO" id="GO:0004640">
    <property type="term" value="F:phosphoribosylanthranilate isomerase activity"/>
    <property type="evidence" value="ECO:0007669"/>
    <property type="project" value="UniProtKB-UniRule"/>
</dbReference>
<dbReference type="GO" id="GO:0000162">
    <property type="term" value="P:L-tryptophan biosynthetic process"/>
    <property type="evidence" value="ECO:0007669"/>
    <property type="project" value="UniProtKB-UniRule"/>
</dbReference>
<dbReference type="CDD" id="cd00405">
    <property type="entry name" value="PRAI"/>
    <property type="match status" value="1"/>
</dbReference>
<dbReference type="Gene3D" id="3.20.20.70">
    <property type="entry name" value="Aldolase class I"/>
    <property type="match status" value="1"/>
</dbReference>
<dbReference type="HAMAP" id="MF_00135">
    <property type="entry name" value="PRAI"/>
    <property type="match status" value="1"/>
</dbReference>
<dbReference type="InterPro" id="IPR013785">
    <property type="entry name" value="Aldolase_TIM"/>
</dbReference>
<dbReference type="InterPro" id="IPR001240">
    <property type="entry name" value="PRAI_dom"/>
</dbReference>
<dbReference type="InterPro" id="IPR011060">
    <property type="entry name" value="RibuloseP-bd_barrel"/>
</dbReference>
<dbReference type="InterPro" id="IPR044643">
    <property type="entry name" value="TrpF_fam"/>
</dbReference>
<dbReference type="NCBIfam" id="NF002303">
    <property type="entry name" value="PRK01222.2-3"/>
    <property type="match status" value="1"/>
</dbReference>
<dbReference type="PANTHER" id="PTHR42894">
    <property type="entry name" value="N-(5'-PHOSPHORIBOSYL)ANTHRANILATE ISOMERASE"/>
    <property type="match status" value="1"/>
</dbReference>
<dbReference type="PANTHER" id="PTHR42894:SF1">
    <property type="entry name" value="N-(5'-PHOSPHORIBOSYL)ANTHRANILATE ISOMERASE"/>
    <property type="match status" value="1"/>
</dbReference>
<dbReference type="Pfam" id="PF00697">
    <property type="entry name" value="PRAI"/>
    <property type="match status" value="1"/>
</dbReference>
<dbReference type="SUPFAM" id="SSF51366">
    <property type="entry name" value="Ribulose-phoshate binding barrel"/>
    <property type="match status" value="1"/>
</dbReference>
<proteinExistence type="inferred from homology"/>
<protein>
    <recommendedName>
        <fullName>N-(5'-phosphoribosyl)anthranilate isomerase</fullName>
        <shortName>PRAI</shortName>
        <ecNumber>5.3.1.24</ecNumber>
    </recommendedName>
</protein>
<name>TRPF_CHLMU</name>
<organism>
    <name type="scientific">Chlamydia muridarum (strain MoPn / Nigg)</name>
    <dbReference type="NCBI Taxonomy" id="243161"/>
    <lineage>
        <taxon>Bacteria</taxon>
        <taxon>Pseudomonadati</taxon>
        <taxon>Chlamydiota</taxon>
        <taxon>Chlamydiia</taxon>
        <taxon>Chlamydiales</taxon>
        <taxon>Chlamydiaceae</taxon>
        <taxon>Chlamydia/Chlamydophila group</taxon>
        <taxon>Chlamydia</taxon>
    </lineage>
</organism>